<keyword id="KW-0010">Activator</keyword>
<keyword id="KW-0238">DNA-binding</keyword>
<keyword id="KW-1185">Reference proteome</keyword>
<keyword id="KW-0804">Transcription</keyword>
<keyword id="KW-0805">Transcription regulation</keyword>
<dbReference type="EMBL" id="AE005674">
    <property type="protein sequence ID" value="AAN45001.2"/>
    <property type="molecule type" value="Genomic_DNA"/>
</dbReference>
<dbReference type="EMBL" id="AE014073">
    <property type="protein sequence ID" value="AAP19185.1"/>
    <property type="molecule type" value="Genomic_DNA"/>
</dbReference>
<dbReference type="RefSeq" id="WP_000576690.1">
    <property type="nucleotide sequence ID" value="NZ_WPGV01000129.1"/>
</dbReference>
<dbReference type="SMR" id="P63207"/>
<dbReference type="STRING" id="198214.SF3546"/>
<dbReference type="PaxDb" id="198214-SF3546"/>
<dbReference type="GeneID" id="93778473"/>
<dbReference type="KEGG" id="sfl:SF3546"/>
<dbReference type="KEGG" id="sfx:S4221"/>
<dbReference type="PATRIC" id="fig|198214.7.peg.4176"/>
<dbReference type="HOGENOM" id="CLU_1522892_0_0_6"/>
<dbReference type="Proteomes" id="UP000001006">
    <property type="component" value="Chromosome"/>
</dbReference>
<dbReference type="Proteomes" id="UP000002673">
    <property type="component" value="Chromosome"/>
</dbReference>
<dbReference type="GO" id="GO:0003677">
    <property type="term" value="F:DNA binding"/>
    <property type="evidence" value="ECO:0007669"/>
    <property type="project" value="UniProtKB-KW"/>
</dbReference>
<dbReference type="GO" id="GO:0006355">
    <property type="term" value="P:regulation of DNA-templated transcription"/>
    <property type="evidence" value="ECO:0007669"/>
    <property type="project" value="InterPro"/>
</dbReference>
<dbReference type="Gene3D" id="1.10.10.10">
    <property type="entry name" value="Winged helix-like DNA-binding domain superfamily/Winged helix DNA-binding domain"/>
    <property type="match status" value="1"/>
</dbReference>
<dbReference type="InterPro" id="IPR016032">
    <property type="entry name" value="Sig_transdc_resp-reg_C-effctor"/>
</dbReference>
<dbReference type="InterPro" id="IPR000792">
    <property type="entry name" value="Tscrpt_reg_LuxR_C"/>
</dbReference>
<dbReference type="InterPro" id="IPR036388">
    <property type="entry name" value="WH-like_DNA-bd_sf"/>
</dbReference>
<dbReference type="Pfam" id="PF00196">
    <property type="entry name" value="GerE"/>
    <property type="match status" value="1"/>
</dbReference>
<dbReference type="SUPFAM" id="SSF46894">
    <property type="entry name" value="C-terminal effector domain of the bipartite response regulators"/>
    <property type="match status" value="1"/>
</dbReference>
<dbReference type="PROSITE" id="PS50043">
    <property type="entry name" value="HTH_LUXR_2"/>
    <property type="match status" value="1"/>
</dbReference>
<reference key="1">
    <citation type="journal article" date="2002" name="Nucleic Acids Res.">
        <title>Genome sequence of Shigella flexneri 2a: insights into pathogenicity through comparison with genomes of Escherichia coli K12 and O157.</title>
        <authorList>
            <person name="Jin Q."/>
            <person name="Yuan Z."/>
            <person name="Xu J."/>
            <person name="Wang Y."/>
            <person name="Shen Y."/>
            <person name="Lu W."/>
            <person name="Wang J."/>
            <person name="Liu H."/>
            <person name="Yang J."/>
            <person name="Yang F."/>
            <person name="Zhang X."/>
            <person name="Zhang J."/>
            <person name="Yang G."/>
            <person name="Wu H."/>
            <person name="Qu D."/>
            <person name="Dong J."/>
            <person name="Sun L."/>
            <person name="Xue Y."/>
            <person name="Zhao A."/>
            <person name="Gao Y."/>
            <person name="Zhu J."/>
            <person name="Kan B."/>
            <person name="Ding K."/>
            <person name="Chen S."/>
            <person name="Cheng H."/>
            <person name="Yao Z."/>
            <person name="He B."/>
            <person name="Chen R."/>
            <person name="Ma D."/>
            <person name="Qiang B."/>
            <person name="Wen Y."/>
            <person name="Hou Y."/>
            <person name="Yu J."/>
        </authorList>
    </citation>
    <scope>NUCLEOTIDE SEQUENCE [LARGE SCALE GENOMIC DNA]</scope>
    <source>
        <strain>301 / Serotype 2a</strain>
    </source>
</reference>
<reference key="2">
    <citation type="journal article" date="2003" name="Infect. Immun.">
        <title>Complete genome sequence and comparative genomics of Shigella flexneri serotype 2a strain 2457T.</title>
        <authorList>
            <person name="Wei J."/>
            <person name="Goldberg M.B."/>
            <person name="Burland V."/>
            <person name="Venkatesan M.M."/>
            <person name="Deng W."/>
            <person name="Fournier G."/>
            <person name="Mayhew G.F."/>
            <person name="Plunkett G. III"/>
            <person name="Rose D.J."/>
            <person name="Darling A."/>
            <person name="Mau B."/>
            <person name="Perna N.T."/>
            <person name="Payne S.M."/>
            <person name="Runyen-Janecky L.J."/>
            <person name="Zhou S."/>
            <person name="Schwartz D.C."/>
            <person name="Blattner F.R."/>
        </authorList>
    </citation>
    <scope>NUCLEOTIDE SEQUENCE [LARGE SCALE GENOMIC DNA]</scope>
    <source>
        <strain>ATCC 700930 / 2457T / Serotype 2a</strain>
    </source>
</reference>
<gene>
    <name type="primary">gadE</name>
    <name type="ordered locus">SF3546</name>
    <name type="ordered locus">S4221</name>
</gene>
<feature type="chain" id="PRO_0000184158" description="Transcriptional regulator GadE">
    <location>
        <begin position="1"/>
        <end position="175"/>
    </location>
</feature>
<feature type="domain" description="HTH luxR-type" evidence="2">
    <location>
        <begin position="109"/>
        <end position="174"/>
    </location>
</feature>
<feature type="DNA-binding region" description="H-T-H motif" evidence="2">
    <location>
        <begin position="133"/>
        <end position="152"/>
    </location>
</feature>
<name>GADE_SHIFL</name>
<evidence type="ECO:0000250" key="1"/>
<evidence type="ECO:0000255" key="2">
    <source>
        <dbReference type="PROSITE-ProRule" id="PRU00411"/>
    </source>
</evidence>
<organism>
    <name type="scientific">Shigella flexneri</name>
    <dbReference type="NCBI Taxonomy" id="623"/>
    <lineage>
        <taxon>Bacteria</taxon>
        <taxon>Pseudomonadati</taxon>
        <taxon>Pseudomonadota</taxon>
        <taxon>Gammaproteobacteria</taxon>
        <taxon>Enterobacterales</taxon>
        <taxon>Enterobacteriaceae</taxon>
        <taxon>Shigella</taxon>
    </lineage>
</organism>
<proteinExistence type="inferred from homology"/>
<protein>
    <recommendedName>
        <fullName>Transcriptional regulator GadE</fullName>
    </recommendedName>
</protein>
<comment type="function">
    <text evidence="1">Regulates the expression of several genes involved in acid resistance. Required for the expression of gadA and gadBC, among others, regardless of media or growth conditions. Binds directly to the 20 bp GAD box found in the control regions of both loci (By similarity).</text>
</comment>
<comment type="induction">
    <text evidence="1">By acidic conditions. Could be induced by EvgA via the induction of YdeO (By similarity).</text>
</comment>
<accession>P63207</accession>
<accession>P29688</accession>
<sequence length="175" mass="20599">MIFLMTKDSFLLQGFWQLKDNHEMIKINSLSEIKKVGNKPFKVIIDTYHNHILDEEAIKFLEKLDAERIIVLAPYHISKLKAKAPIYFVSRKESIKNLLEITYGKHLPHKNSQLCFSHNQFKIMQLILKNKNESNITSTLNISQQTLKIQKFNIMYKLKLRRMSDIVTLGITSYF</sequence>